<proteinExistence type="inferred from homology"/>
<gene>
    <name evidence="1" type="primary">ftsL</name>
    <name type="ordered locus">VC_2408</name>
</gene>
<dbReference type="EMBL" id="AE003852">
    <property type="protein sequence ID" value="AAF95551.1"/>
    <property type="molecule type" value="Genomic_DNA"/>
</dbReference>
<dbReference type="PIR" id="D82082">
    <property type="entry name" value="D82082"/>
</dbReference>
<dbReference type="RefSeq" id="NP_232038.1">
    <property type="nucleotide sequence ID" value="NC_002505.1"/>
</dbReference>
<dbReference type="RefSeq" id="WP_001137975.1">
    <property type="nucleotide sequence ID" value="NZ_LT906614.1"/>
</dbReference>
<dbReference type="SMR" id="Q9KPG0"/>
<dbReference type="STRING" id="243277.VC_2408"/>
<dbReference type="DNASU" id="2613077"/>
<dbReference type="EnsemblBacteria" id="AAF95551">
    <property type="protein sequence ID" value="AAF95551"/>
    <property type="gene ID" value="VC_2408"/>
</dbReference>
<dbReference type="GeneID" id="88783219"/>
<dbReference type="KEGG" id="vch:VC_2408"/>
<dbReference type="PATRIC" id="fig|243277.26.peg.2293"/>
<dbReference type="eggNOG" id="COG3116">
    <property type="taxonomic scope" value="Bacteria"/>
</dbReference>
<dbReference type="HOGENOM" id="CLU_156524_2_0_6"/>
<dbReference type="Proteomes" id="UP000000584">
    <property type="component" value="Chromosome 1"/>
</dbReference>
<dbReference type="GO" id="GO:0032153">
    <property type="term" value="C:cell division site"/>
    <property type="evidence" value="ECO:0000318"/>
    <property type="project" value="GO_Central"/>
</dbReference>
<dbReference type="GO" id="GO:0005886">
    <property type="term" value="C:plasma membrane"/>
    <property type="evidence" value="ECO:0000318"/>
    <property type="project" value="GO_Central"/>
</dbReference>
<dbReference type="GO" id="GO:0043093">
    <property type="term" value="P:FtsZ-dependent cytokinesis"/>
    <property type="evidence" value="ECO:0000318"/>
    <property type="project" value="GO_Central"/>
</dbReference>
<dbReference type="HAMAP" id="MF_00910">
    <property type="entry name" value="FtsL"/>
    <property type="match status" value="1"/>
</dbReference>
<dbReference type="InterPro" id="IPR011922">
    <property type="entry name" value="Cell_div_FtsL"/>
</dbReference>
<dbReference type="NCBIfam" id="TIGR02209">
    <property type="entry name" value="ftsL_broad"/>
    <property type="match status" value="1"/>
</dbReference>
<dbReference type="PANTHER" id="PTHR37479">
    <property type="entry name" value="CELL DIVISION PROTEIN FTSL"/>
    <property type="match status" value="1"/>
</dbReference>
<dbReference type="PANTHER" id="PTHR37479:SF1">
    <property type="entry name" value="CELL DIVISION PROTEIN FTSL"/>
    <property type="match status" value="1"/>
</dbReference>
<dbReference type="Pfam" id="PF04999">
    <property type="entry name" value="FtsL"/>
    <property type="match status" value="1"/>
</dbReference>
<keyword id="KW-0131">Cell cycle</keyword>
<keyword id="KW-0132">Cell division</keyword>
<keyword id="KW-0997">Cell inner membrane</keyword>
<keyword id="KW-1003">Cell membrane</keyword>
<keyword id="KW-0472">Membrane</keyword>
<keyword id="KW-1185">Reference proteome</keyword>
<keyword id="KW-0812">Transmembrane</keyword>
<keyword id="KW-1133">Transmembrane helix</keyword>
<comment type="function">
    <text evidence="1">Essential cell division protein. May link together the upstream cell division proteins, which are predominantly cytoplasmic, with the downstream cell division proteins, which are predominantly periplasmic.</text>
</comment>
<comment type="subunit">
    <text evidence="1">Part of a complex composed of FtsB, FtsL and FtsQ.</text>
</comment>
<comment type="subcellular location">
    <subcellularLocation>
        <location evidence="1">Cell inner membrane</location>
        <topology evidence="1">Single-pass type II membrane protein</topology>
    </subcellularLocation>
    <text evidence="1">Localizes to the division septum where it forms a ring structure.</text>
</comment>
<comment type="similarity">
    <text evidence="1">Belongs to the FtsL family.</text>
</comment>
<reference key="1">
    <citation type="journal article" date="2000" name="Nature">
        <title>DNA sequence of both chromosomes of the cholera pathogen Vibrio cholerae.</title>
        <authorList>
            <person name="Heidelberg J.F."/>
            <person name="Eisen J.A."/>
            <person name="Nelson W.C."/>
            <person name="Clayton R.A."/>
            <person name="Gwinn M.L."/>
            <person name="Dodson R.J."/>
            <person name="Haft D.H."/>
            <person name="Hickey E.K."/>
            <person name="Peterson J.D."/>
            <person name="Umayam L.A."/>
            <person name="Gill S.R."/>
            <person name="Nelson K.E."/>
            <person name="Read T.D."/>
            <person name="Tettelin H."/>
            <person name="Richardson D.L."/>
            <person name="Ermolaeva M.D."/>
            <person name="Vamathevan J.J."/>
            <person name="Bass S."/>
            <person name="Qin H."/>
            <person name="Dragoi I."/>
            <person name="Sellers P."/>
            <person name="McDonald L.A."/>
            <person name="Utterback T.R."/>
            <person name="Fleischmann R.D."/>
            <person name="Nierman W.C."/>
            <person name="White O."/>
            <person name="Salzberg S.L."/>
            <person name="Smith H.O."/>
            <person name="Colwell R.R."/>
            <person name="Mekalanos J.J."/>
            <person name="Venter J.C."/>
            <person name="Fraser C.M."/>
        </authorList>
    </citation>
    <scope>NUCLEOTIDE SEQUENCE [LARGE SCALE GENOMIC DNA]</scope>
    <source>
        <strain>ATCC 39315 / El Tor Inaba N16961</strain>
    </source>
</reference>
<sequence>MPRQSPPNLAKLIALDLLTVGRVPLLLLVLIFSCAMGVVFMTHHTRQAISAKDQAFMERERLDNEWRNLILEETALAEHSRVQQLARKDLEMKRPDSDKEVVINLK</sequence>
<name>FTSL_VIBCH</name>
<accession>Q9KPG0</accession>
<organism>
    <name type="scientific">Vibrio cholerae serotype O1 (strain ATCC 39315 / El Tor Inaba N16961)</name>
    <dbReference type="NCBI Taxonomy" id="243277"/>
    <lineage>
        <taxon>Bacteria</taxon>
        <taxon>Pseudomonadati</taxon>
        <taxon>Pseudomonadota</taxon>
        <taxon>Gammaproteobacteria</taxon>
        <taxon>Vibrionales</taxon>
        <taxon>Vibrionaceae</taxon>
        <taxon>Vibrio</taxon>
    </lineage>
</organism>
<feature type="chain" id="PRO_0000414572" description="Cell division protein FtsL">
    <location>
        <begin position="1"/>
        <end position="106"/>
    </location>
</feature>
<feature type="topological domain" description="Cytoplasmic" evidence="1">
    <location>
        <begin position="1"/>
        <end position="22"/>
    </location>
</feature>
<feature type="transmembrane region" description="Helical" evidence="1">
    <location>
        <begin position="23"/>
        <end position="43"/>
    </location>
</feature>
<feature type="topological domain" description="Periplasmic" evidence="1">
    <location>
        <begin position="44"/>
        <end position="106"/>
    </location>
</feature>
<protein>
    <recommendedName>
        <fullName evidence="1">Cell division protein FtsL</fullName>
    </recommendedName>
</protein>
<evidence type="ECO:0000255" key="1">
    <source>
        <dbReference type="HAMAP-Rule" id="MF_00910"/>
    </source>
</evidence>